<reference key="1">
    <citation type="journal article" date="2004" name="Genome Res.">
        <title>The status, quality, and expansion of the NIH full-length cDNA project: the Mammalian Gene Collection (MGC).</title>
        <authorList>
            <consortium name="The MGC Project Team"/>
        </authorList>
    </citation>
    <scope>NUCLEOTIDE SEQUENCE [LARGE SCALE MRNA]</scope>
    <source>
        <tissue>Skin</tissue>
    </source>
</reference>
<reference key="2">
    <citation type="journal article" date="2009" name="Anal. Chem.">
        <title>Lys-N and trypsin cover complementary parts of the phosphoproteome in a refined SCX-based approach.</title>
        <authorList>
            <person name="Gauci S."/>
            <person name="Helbig A.O."/>
            <person name="Slijper M."/>
            <person name="Krijgsveld J."/>
            <person name="Heck A.J."/>
            <person name="Mohammed S."/>
        </authorList>
    </citation>
    <scope>ACETYLATION [LARGE SCALE ANALYSIS] AT MET-1</scope>
    <scope>IDENTIFICATION BY MASS SPECTROMETRY [LARGE SCALE ANALYSIS]</scope>
</reference>
<reference key="3">
    <citation type="journal article" date="2011" name="BMC Syst. Biol.">
        <title>Initial characterization of the human central proteome.</title>
        <authorList>
            <person name="Burkard T.R."/>
            <person name="Planyavsky M."/>
            <person name="Kaupe I."/>
            <person name="Breitwieser F.P."/>
            <person name="Buerckstuemmer T."/>
            <person name="Bennett K.L."/>
            <person name="Superti-Furga G."/>
            <person name="Colinge J."/>
        </authorList>
    </citation>
    <scope>IDENTIFICATION BY MASS SPECTROMETRY [LARGE SCALE ANALYSIS]</scope>
</reference>
<reference key="4">
    <citation type="journal article" date="2006" name="Science">
        <title>The consensus coding sequences of human breast and colorectal cancers.</title>
        <authorList>
            <person name="Sjoeblom T."/>
            <person name="Jones S."/>
            <person name="Wood L.D."/>
            <person name="Parsons D.W."/>
            <person name="Lin J."/>
            <person name="Barber T.D."/>
            <person name="Mandelker D."/>
            <person name="Leary R.J."/>
            <person name="Ptak J."/>
            <person name="Silliman N."/>
            <person name="Szabo S."/>
            <person name="Buckhaults P."/>
            <person name="Farrell C."/>
            <person name="Meeh P."/>
            <person name="Markowitz S.D."/>
            <person name="Willis J."/>
            <person name="Dawson D."/>
            <person name="Willson J.K.V."/>
            <person name="Gazdar A.F."/>
            <person name="Hartigan J."/>
            <person name="Wu L."/>
            <person name="Liu C."/>
            <person name="Parmigiani G."/>
            <person name="Park B.H."/>
            <person name="Bachman K.E."/>
            <person name="Papadopoulos N."/>
            <person name="Vogelstein B."/>
            <person name="Kinzler K.W."/>
            <person name="Velculescu V.E."/>
        </authorList>
    </citation>
    <scope>VARIANT [LARGE SCALE ANALYSIS] CYS-332</scope>
</reference>
<reference key="5">
    <citation type="journal article" date="2013" name="J. Med. Genet.">
        <title>Mutation in ADAT3, encoding adenosine deaminase acting on transfer RNA, causes intellectual disability and strabismus.</title>
        <authorList>
            <person name="Alazami A.M."/>
            <person name="Hijazi H."/>
            <person name="Al-Dosari M.S."/>
            <person name="Shaheen R."/>
            <person name="Hashem A."/>
            <person name="Aldahmesh M.A."/>
            <person name="Mohamed J.Y."/>
            <person name="Kentab A."/>
            <person name="Salih M.A."/>
            <person name="Awaji A."/>
            <person name="Masoodi T.A."/>
            <person name="Alkuraya F.S."/>
        </authorList>
    </citation>
    <scope>VARIANT NEDBGF MET-128</scope>
</reference>
<dbReference type="EMBL" id="BC011824">
    <property type="protein sequence ID" value="AAH11824.1"/>
    <property type="molecule type" value="mRNA"/>
</dbReference>
<dbReference type="RefSeq" id="NP_001316462.1">
    <property type="nucleotide sequence ID" value="NM_001329533.2"/>
</dbReference>
<dbReference type="RefSeq" id="NP_612431.2">
    <property type="nucleotide sequence ID" value="NM_138422.3"/>
</dbReference>
<dbReference type="SMR" id="Q96EY9"/>
<dbReference type="BioGRID" id="125231">
    <property type="interactions" value="26"/>
</dbReference>
<dbReference type="FunCoup" id="Q96EY9">
    <property type="interactions" value="1988"/>
</dbReference>
<dbReference type="IntAct" id="Q96EY9">
    <property type="interactions" value="21"/>
</dbReference>
<dbReference type="STRING" id="9606.ENSP00000332448"/>
<dbReference type="iPTMnet" id="Q96EY9"/>
<dbReference type="PhosphoSitePlus" id="Q96EY9"/>
<dbReference type="BioMuta" id="ADAT3"/>
<dbReference type="DMDM" id="74731634"/>
<dbReference type="jPOST" id="Q96EY9"/>
<dbReference type="MassIVE" id="Q96EY9"/>
<dbReference type="PaxDb" id="9606-ENSP00000332448"/>
<dbReference type="ProteomicsDB" id="76475"/>
<dbReference type="Pumba" id="Q96EY9"/>
<dbReference type="DNASU" id="113179"/>
<dbReference type="GeneID" id="113179"/>
<dbReference type="KEGG" id="hsa:113179"/>
<dbReference type="AGR" id="HGNC:25151"/>
<dbReference type="CTD" id="113179"/>
<dbReference type="DisGeNET" id="113179"/>
<dbReference type="GeneCards" id="ADAT3"/>
<dbReference type="HGNC" id="HGNC:25151">
    <property type="gene designation" value="ADAT3"/>
</dbReference>
<dbReference type="MalaCards" id="ADAT3"/>
<dbReference type="MIM" id="615286">
    <property type="type" value="phenotype"/>
</dbReference>
<dbReference type="MIM" id="615302">
    <property type="type" value="gene"/>
</dbReference>
<dbReference type="neXtProt" id="NX_Q96EY9"/>
<dbReference type="Orphanet" id="363528">
    <property type="disease" value="Intellectual disability-strabismus syndrome"/>
</dbReference>
<dbReference type="PharmGKB" id="PA162375609"/>
<dbReference type="eggNOG" id="KOG2771">
    <property type="taxonomic scope" value="Eukaryota"/>
</dbReference>
<dbReference type="InParanoid" id="Q96EY9"/>
<dbReference type="OrthoDB" id="3180714at2759"/>
<dbReference type="PAN-GO" id="Q96EY9">
    <property type="GO annotations" value="1 GO annotation based on evolutionary models"/>
</dbReference>
<dbReference type="PhylomeDB" id="Q96EY9"/>
<dbReference type="TreeFam" id="TF313277"/>
<dbReference type="PathwayCommons" id="Q96EY9"/>
<dbReference type="Reactome" id="R-HSA-6782315">
    <property type="pathway name" value="tRNA modification in the nucleus and cytosol"/>
</dbReference>
<dbReference type="SignaLink" id="Q96EY9"/>
<dbReference type="BioGRID-ORCS" id="113179">
    <property type="hits" value="336 hits in 1142 CRISPR screens"/>
</dbReference>
<dbReference type="GenomeRNAi" id="113179"/>
<dbReference type="Pharos" id="Q96EY9">
    <property type="development level" value="Tdark"/>
</dbReference>
<dbReference type="PRO" id="PR:Q96EY9"/>
<dbReference type="Proteomes" id="UP000005640">
    <property type="component" value="Unplaced"/>
</dbReference>
<dbReference type="RNAct" id="Q96EY9">
    <property type="molecule type" value="protein"/>
</dbReference>
<dbReference type="GO" id="GO:0005737">
    <property type="term" value="C:cytoplasm"/>
    <property type="evidence" value="ECO:0000318"/>
    <property type="project" value="GO_Central"/>
</dbReference>
<dbReference type="GO" id="GO:0005654">
    <property type="term" value="C:nucleoplasm"/>
    <property type="evidence" value="ECO:0000304"/>
    <property type="project" value="Reactome"/>
</dbReference>
<dbReference type="GO" id="GO:0005634">
    <property type="term" value="C:nucleus"/>
    <property type="evidence" value="ECO:0000318"/>
    <property type="project" value="GO_Central"/>
</dbReference>
<dbReference type="GO" id="GO:0003824">
    <property type="term" value="F:catalytic activity"/>
    <property type="evidence" value="ECO:0007669"/>
    <property type="project" value="InterPro"/>
</dbReference>
<dbReference type="GO" id="GO:0046872">
    <property type="term" value="F:metal ion binding"/>
    <property type="evidence" value="ECO:0007669"/>
    <property type="project" value="UniProtKB-KW"/>
</dbReference>
<dbReference type="GO" id="GO:0008033">
    <property type="term" value="P:tRNA processing"/>
    <property type="evidence" value="ECO:0007669"/>
    <property type="project" value="UniProtKB-KW"/>
</dbReference>
<dbReference type="CDD" id="cd01285">
    <property type="entry name" value="nucleoside_deaminase"/>
    <property type="match status" value="1"/>
</dbReference>
<dbReference type="Gene3D" id="3.40.140.10">
    <property type="entry name" value="Cytidine Deaminase, domain 2"/>
    <property type="match status" value="1"/>
</dbReference>
<dbReference type="InterPro" id="IPR002125">
    <property type="entry name" value="CMP_dCMP_dom"/>
</dbReference>
<dbReference type="InterPro" id="IPR016193">
    <property type="entry name" value="Cytidine_deaminase-like"/>
</dbReference>
<dbReference type="PANTHER" id="PTHR11079">
    <property type="entry name" value="CYTOSINE DEAMINASE FAMILY MEMBER"/>
    <property type="match status" value="1"/>
</dbReference>
<dbReference type="PANTHER" id="PTHR11079:SF156">
    <property type="entry name" value="INACTIVE TRNA-SPECIFIC ADENOSINE DEAMINASE-LIKE PROTEIN 3-RELATED"/>
    <property type="match status" value="1"/>
</dbReference>
<dbReference type="Pfam" id="PF00383">
    <property type="entry name" value="dCMP_cyt_deam_1"/>
    <property type="match status" value="1"/>
</dbReference>
<dbReference type="SUPFAM" id="SSF53927">
    <property type="entry name" value="Cytidine deaminase-like"/>
    <property type="match status" value="1"/>
</dbReference>
<dbReference type="PROSITE" id="PS51747">
    <property type="entry name" value="CYT_DCMP_DEAMINASES_2"/>
    <property type="match status" value="1"/>
</dbReference>
<protein>
    <recommendedName>
        <fullName>Probable inactive tRNA-specific adenosine deaminase-like protein 3</fullName>
    </recommendedName>
    <alternativeName>
        <fullName>tRNA-specific adenosine-34 deaminase subunit ADAT3</fullName>
    </alternativeName>
</protein>
<gene>
    <name type="primary">ADAT3</name>
    <name type="synonym">TAD3</name>
</gene>
<feature type="chain" id="PRO_0000287658" description="Probable inactive tRNA-specific adenosine deaminase-like protein 3">
    <location>
        <begin position="1"/>
        <end position="351"/>
    </location>
</feature>
<feature type="domain" description="CMP/dCMP-type deaminase" evidence="2">
    <location>
        <begin position="171"/>
        <end position="336"/>
    </location>
</feature>
<feature type="region of interest" description="Disordered" evidence="3">
    <location>
        <begin position="1"/>
        <end position="26"/>
    </location>
</feature>
<feature type="binding site" evidence="1">
    <location>
        <position position="223"/>
    </location>
    <ligand>
        <name>Zn(2+)</name>
        <dbReference type="ChEBI" id="CHEBI:29105"/>
    </ligand>
</feature>
<feature type="binding site" evidence="1">
    <location>
        <position position="291"/>
    </location>
    <ligand>
        <name>Zn(2+)</name>
        <dbReference type="ChEBI" id="CHEBI:29105"/>
    </ligand>
</feature>
<feature type="binding site" evidence="1">
    <location>
        <position position="294"/>
    </location>
    <ligand>
        <name>Zn(2+)</name>
        <dbReference type="ChEBI" id="CHEBI:29105"/>
    </ligand>
</feature>
<feature type="modified residue" description="N-acetylmethionine" evidence="7">
    <location>
        <position position="1"/>
    </location>
</feature>
<feature type="sequence variant" id="VAR_069778" description="In NEDBGF." evidence="5">
    <original>V</original>
    <variation>M</variation>
    <location>
        <position position="128"/>
    </location>
</feature>
<feature type="sequence variant" id="VAR_035804" description="In a breast cancer sample; somatic mutation." evidence="4">
    <original>R</original>
    <variation>C</variation>
    <location>
        <position position="332"/>
    </location>
</feature>
<comment type="cofactor">
    <cofactor evidence="1">
        <name>Zn(2+)</name>
        <dbReference type="ChEBI" id="CHEBI:29105"/>
    </cofactor>
</comment>
<comment type="interaction">
    <interactant intactId="EBI-3922811">
        <id>Q96EY9</id>
    </interactant>
    <interactant intactId="EBI-2809203">
        <id>Q7Z6V5</id>
        <label>ADAT2</label>
    </interactant>
    <organismsDiffer>false</organismsDiffer>
    <experiments>2</experiments>
</comment>
<comment type="interaction">
    <interactant intactId="EBI-3922811">
        <id>Q96EY9</id>
    </interactant>
    <interactant intactId="EBI-9250559">
        <id>P32320</id>
        <label>CDA</label>
    </interactant>
    <organismsDiffer>false</organismsDiffer>
    <experiments>3</experiments>
</comment>
<comment type="interaction">
    <interactant intactId="EBI-3922811">
        <id>Q96EY9</id>
    </interactant>
    <interactant intactId="EBI-3864120">
        <id>Q8WUP2</id>
        <label>FBLIM1</label>
    </interactant>
    <organismsDiffer>false</organismsDiffer>
    <experiments>3</experiments>
</comment>
<comment type="interaction">
    <interactant intactId="EBI-3922811">
        <id>Q96EY9</id>
    </interactant>
    <interactant intactId="EBI-741237">
        <id>O60504</id>
        <label>SORBS3</label>
    </interactant>
    <organismsDiffer>false</organismsDiffer>
    <experiments>3</experiments>
</comment>
<comment type="disease" evidence="5">
    <disease id="DI-03799">
        <name>Neurodevelopmental disorder with brain abnormalities, poor growth, and dysmorphic facies</name>
        <acronym>NEDBGF</acronym>
        <description>An autosomal recessive disorder characterized by global developmental delay, impaired intellectual development, and speech delay apparent from infancy or early childhood. Most patients have dysmorphic facial features, and white matter abnormalities on brain imaging. More variable features may include teeth anomalies, distal joint contractures, spasticity, peripheral neuropathy, and behavioral problems.</description>
        <dbReference type="MIM" id="615286"/>
    </disease>
    <text>The disease is caused by variants affecting the gene represented in this entry.</text>
</comment>
<comment type="similarity">
    <text evidence="6">Belongs to the cytidine and deoxycytidylate deaminase family. ADAT3 subfamily.</text>
</comment>
<comment type="caution">
    <text evidence="6">Val-225 is present instead of the conserved Glu which is an active site in the cytidine and deoxycytidylate deaminase family of enzymes. It is suggested that this protein may act as a regulatory subunit.</text>
</comment>
<sequence>MEPAPGLVEQPKCLEAGSPEPEPAPWQALPVLSEKQSGDVELVLAYAAPVLDKRQTSRLLKEVSALHPLPAQPHLKRVRPSRDAGSPHALEMLLCLAGPASGPRSLAELLPRPAVDPRGLGQPFLVPVPARPPLTRGQFEEARAHWPTSFHEDKQVTSALAGRLFSTQERAAMQSHMERAVWAARRAAARGLRAVGAVVVDPASDRVLATGHDCSCADNPLLHAVMVCVDLVARGQGRGTYDFRPFPACSFAPAAAPQAVRAGAVRKLDADEDGLPYLCTGYDLYVTREPCAMCAMALVHARILRVFYGAPSPDGALGTRFRIHARPDLNHRFQVFRGVLEEQCRWLDPDT</sequence>
<name>ADAT3_HUMAN</name>
<accession>Q96EY9</accession>
<organism>
    <name type="scientific">Homo sapiens</name>
    <name type="common">Human</name>
    <dbReference type="NCBI Taxonomy" id="9606"/>
    <lineage>
        <taxon>Eukaryota</taxon>
        <taxon>Metazoa</taxon>
        <taxon>Chordata</taxon>
        <taxon>Craniata</taxon>
        <taxon>Vertebrata</taxon>
        <taxon>Euteleostomi</taxon>
        <taxon>Mammalia</taxon>
        <taxon>Eutheria</taxon>
        <taxon>Euarchontoglires</taxon>
        <taxon>Primates</taxon>
        <taxon>Haplorrhini</taxon>
        <taxon>Catarrhini</taxon>
        <taxon>Hominidae</taxon>
        <taxon>Homo</taxon>
    </lineage>
</organism>
<evidence type="ECO:0000250" key="1"/>
<evidence type="ECO:0000255" key="2">
    <source>
        <dbReference type="PROSITE-ProRule" id="PRU01083"/>
    </source>
</evidence>
<evidence type="ECO:0000256" key="3">
    <source>
        <dbReference type="SAM" id="MobiDB-lite"/>
    </source>
</evidence>
<evidence type="ECO:0000269" key="4">
    <source>
    </source>
</evidence>
<evidence type="ECO:0000269" key="5">
    <source>
    </source>
</evidence>
<evidence type="ECO:0000305" key="6"/>
<evidence type="ECO:0007744" key="7">
    <source>
    </source>
</evidence>
<keyword id="KW-0007">Acetylation</keyword>
<keyword id="KW-0225">Disease variant</keyword>
<keyword id="KW-0991">Intellectual disability</keyword>
<keyword id="KW-0479">Metal-binding</keyword>
<keyword id="KW-1267">Proteomics identification</keyword>
<keyword id="KW-1185">Reference proteome</keyword>
<keyword id="KW-0819">tRNA processing</keyword>
<keyword id="KW-0862">Zinc</keyword>
<proteinExistence type="evidence at protein level"/>